<evidence type="ECO:0000255" key="1"/>
<evidence type="ECO:0000305" key="2"/>
<evidence type="ECO:0000305" key="3">
    <source>
    </source>
</evidence>
<evidence type="ECO:0000312" key="4">
    <source>
        <dbReference type="SGD" id="S000004904"/>
    </source>
</evidence>
<accession>A0A023PZH5</accession>
<name>YM290_YEAST</name>
<reference key="1">
    <citation type="journal article" date="1997" name="Nature">
        <title>The nucleotide sequence of Saccharomyces cerevisiae chromosome XIII.</title>
        <authorList>
            <person name="Bowman S."/>
            <person name="Churcher C.M."/>
            <person name="Badcock K."/>
            <person name="Brown D."/>
            <person name="Chillingworth T."/>
            <person name="Connor R."/>
            <person name="Dedman K."/>
            <person name="Devlin K."/>
            <person name="Gentles S."/>
            <person name="Hamlin N."/>
            <person name="Hunt S."/>
            <person name="Jagels K."/>
            <person name="Lye G."/>
            <person name="Moule S."/>
            <person name="Odell C."/>
            <person name="Pearson D."/>
            <person name="Rajandream M.A."/>
            <person name="Rice P."/>
            <person name="Skelton J."/>
            <person name="Walsh S.V."/>
            <person name="Whitehead S."/>
            <person name="Barrell B.G."/>
        </authorList>
    </citation>
    <scope>NUCLEOTIDE SEQUENCE [LARGE SCALE GENOMIC DNA]</scope>
    <source>
        <strain>ATCC 204508 / S288c</strain>
    </source>
</reference>
<reference key="2">
    <citation type="journal article" date="2014" name="G3 (Bethesda)">
        <title>The reference genome sequence of Saccharomyces cerevisiae: Then and now.</title>
        <authorList>
            <person name="Engel S.R."/>
            <person name="Dietrich F.S."/>
            <person name="Fisk D.G."/>
            <person name="Binkley G."/>
            <person name="Balakrishnan R."/>
            <person name="Costanzo M.C."/>
            <person name="Dwight S.S."/>
            <person name="Hitz B.C."/>
            <person name="Karra K."/>
            <person name="Nash R.S."/>
            <person name="Weng S."/>
            <person name="Wong E.D."/>
            <person name="Lloyd P."/>
            <person name="Skrzypek M.S."/>
            <person name="Miyasato S.R."/>
            <person name="Simison M."/>
            <person name="Cherry J.M."/>
        </authorList>
    </citation>
    <scope>GENOME REANNOTATION</scope>
    <source>
        <strain>ATCC 204508 / S288c</strain>
    </source>
</reference>
<gene>
    <name evidence="4" type="ordered locus">YMR290W-A</name>
</gene>
<organism>
    <name type="scientific">Saccharomyces cerevisiae (strain ATCC 204508 / S288c)</name>
    <name type="common">Baker's yeast</name>
    <dbReference type="NCBI Taxonomy" id="559292"/>
    <lineage>
        <taxon>Eukaryota</taxon>
        <taxon>Fungi</taxon>
        <taxon>Dikarya</taxon>
        <taxon>Ascomycota</taxon>
        <taxon>Saccharomycotina</taxon>
        <taxon>Saccharomycetes</taxon>
        <taxon>Saccharomycetales</taxon>
        <taxon>Saccharomycetaceae</taxon>
        <taxon>Saccharomyces</taxon>
    </lineage>
</organism>
<keyword id="KW-0472">Membrane</keyword>
<keyword id="KW-0812">Transmembrane</keyword>
<keyword id="KW-1133">Transmembrane helix</keyword>
<proteinExistence type="uncertain"/>
<sequence length="115" mass="12852">MAFKVGCDNFSSSNFSTQVVCSPSGAALFCFEVLFSSTTGSSVDSESLERLFDGVAILLLLILLSLSNYYSIQLSNSYVLKYRVYTIKSHLIAKANIEKKKKKKKKKQIKNFQFG</sequence>
<dbReference type="EMBL" id="KJ412293">
    <property type="protein sequence ID" value="AHX39336.1"/>
    <property type="molecule type" value="Genomic_DNA"/>
</dbReference>
<dbReference type="PIR" id="S69849">
    <property type="entry name" value="S69849"/>
</dbReference>
<dbReference type="MINT" id="A0A023PZH5"/>
<dbReference type="PaxDb" id="4932-YMR290W-A"/>
<dbReference type="EnsemblFungi" id="YMR290W-A_mRNA">
    <property type="protein sequence ID" value="YMR290W-A"/>
    <property type="gene ID" value="YMR290W-A"/>
</dbReference>
<dbReference type="AGR" id="SGD:S000004904"/>
<dbReference type="SGD" id="S000004904">
    <property type="gene designation" value="YMR290W-A"/>
</dbReference>
<dbReference type="HOGENOM" id="CLU_2110843_0_0_1"/>
<dbReference type="GO" id="GO:0016020">
    <property type="term" value="C:membrane"/>
    <property type="evidence" value="ECO:0007669"/>
    <property type="project" value="UniProtKB-SubCell"/>
</dbReference>
<protein>
    <recommendedName>
        <fullName evidence="2">Putative uncharacterized membrane protein YMR290W-A</fullName>
    </recommendedName>
</protein>
<feature type="chain" id="PRO_0000431053" description="Putative uncharacterized membrane protein YMR290W-A">
    <location>
        <begin position="1"/>
        <end position="115"/>
    </location>
</feature>
<feature type="transmembrane region" description="Helical; Name=1" evidence="1">
    <location>
        <begin position="15"/>
        <end position="35"/>
    </location>
</feature>
<feature type="transmembrane region" description="Helical; Name=2" evidence="1">
    <location>
        <begin position="52"/>
        <end position="72"/>
    </location>
</feature>
<comment type="subcellular location">
    <subcellularLocation>
        <location evidence="1">Membrane</location>
        <topology evidence="1">Multi-pass membrane protein</topology>
    </subcellularLocation>
</comment>
<comment type="miscellaneous">
    <text evidence="2">Partially overlaps HAS1.</text>
</comment>
<comment type="caution">
    <text evidence="3">Product of a dubious gene prediction unlikely to encode a functional protein. Because of that it is not part of the S.cerevisiae S288c complete/reference proteome set.</text>
</comment>